<feature type="initiator methionine" description="Removed" evidence="1">
    <location>
        <position position="1"/>
    </location>
</feature>
<feature type="chain" id="PRO_0000158313" description="Histone H4.2">
    <location>
        <begin position="2"/>
        <end position="103"/>
    </location>
</feature>
<feature type="DNA-binding region">
    <location>
        <begin position="17"/>
        <end position="21"/>
    </location>
</feature>
<feature type="region of interest" description="Disordered" evidence="4">
    <location>
        <begin position="1"/>
        <end position="20"/>
    </location>
</feature>
<feature type="compositionally biased region" description="Gly residues" evidence="4">
    <location>
        <begin position="1"/>
        <end position="14"/>
    </location>
</feature>
<feature type="modified residue" description="N6-acetyl-N6-methyllysine; alternate" evidence="3">
    <location>
        <position position="6"/>
    </location>
</feature>
<feature type="modified residue" description="N6-methyllysine; alternate" evidence="2">
    <location>
        <position position="6"/>
    </location>
</feature>
<feature type="modified residue" description="N6-methyllysine; alternate" evidence="2">
    <location>
        <position position="9"/>
    </location>
</feature>
<feature type="modified residue" description="N6-acetyl-N6-methyllysine; alternate" evidence="3">
    <location>
        <position position="13"/>
    </location>
</feature>
<feature type="modified residue" description="N6-methyllysine; alternate" evidence="2">
    <location>
        <position position="13"/>
    </location>
</feature>
<feature type="modified residue" description="N6-glutaryllysine" evidence="2">
    <location>
        <position position="92"/>
    </location>
</feature>
<organism>
    <name type="scientific">Emericella nidulans (strain FGSC A4 / ATCC 38163 / CBS 112.46 / NRRL 194 / M139)</name>
    <name type="common">Aspergillus nidulans</name>
    <dbReference type="NCBI Taxonomy" id="227321"/>
    <lineage>
        <taxon>Eukaryota</taxon>
        <taxon>Fungi</taxon>
        <taxon>Dikarya</taxon>
        <taxon>Ascomycota</taxon>
        <taxon>Pezizomycotina</taxon>
        <taxon>Eurotiomycetes</taxon>
        <taxon>Eurotiomycetidae</taxon>
        <taxon>Eurotiales</taxon>
        <taxon>Aspergillaceae</taxon>
        <taxon>Aspergillus</taxon>
        <taxon>Aspergillus subgen. Nidulantes</taxon>
    </lineage>
</organism>
<evidence type="ECO:0000250" key="1"/>
<evidence type="ECO:0000250" key="2">
    <source>
        <dbReference type="UniProtKB" id="P02309"/>
    </source>
</evidence>
<evidence type="ECO:0000250" key="3">
    <source>
        <dbReference type="UniProtKB" id="P62805"/>
    </source>
</evidence>
<evidence type="ECO:0000256" key="4">
    <source>
        <dbReference type="SAM" id="MobiDB-lite"/>
    </source>
</evidence>
<evidence type="ECO:0000305" key="5"/>
<dbReference type="EMBL" id="U12631">
    <property type="protein sequence ID" value="AAA20821.1"/>
    <property type="molecule type" value="Genomic_DNA"/>
</dbReference>
<dbReference type="EMBL" id="X55550">
    <property type="protein sequence ID" value="CAA39156.1"/>
    <property type="molecule type" value="Genomic_DNA"/>
</dbReference>
<dbReference type="EMBL" id="AACD01000040">
    <property type="protein sequence ID" value="EAA64132.1"/>
    <property type="molecule type" value="Genomic_DNA"/>
</dbReference>
<dbReference type="EMBL" id="BN001307">
    <property type="protein sequence ID" value="CBF86829.1"/>
    <property type="molecule type" value="Genomic_DNA"/>
</dbReference>
<dbReference type="PIR" id="S11940">
    <property type="entry name" value="S11940"/>
</dbReference>
<dbReference type="RefSeq" id="XP_660030.1">
    <property type="nucleotide sequence ID" value="XM_654938.1"/>
</dbReference>
<dbReference type="SMR" id="P23751"/>
<dbReference type="FunCoup" id="P23751">
    <property type="interactions" value="1180"/>
</dbReference>
<dbReference type="STRING" id="227321.P23751"/>
<dbReference type="EnsemblFungi" id="CBF86829">
    <property type="protein sequence ID" value="CBF86829"/>
    <property type="gene ID" value="ANIA_02426"/>
</dbReference>
<dbReference type="KEGG" id="ani:ANIA_02426"/>
<dbReference type="VEuPathDB" id="FungiDB:AN2426"/>
<dbReference type="eggNOG" id="KOG3467">
    <property type="taxonomic scope" value="Eukaryota"/>
</dbReference>
<dbReference type="HOGENOM" id="CLU_109117_2_3_1"/>
<dbReference type="InParanoid" id="P23751"/>
<dbReference type="OMA" id="XRISAMI"/>
<dbReference type="OrthoDB" id="3919494at2759"/>
<dbReference type="Proteomes" id="UP000000560">
    <property type="component" value="Chromosome VII"/>
</dbReference>
<dbReference type="GO" id="GO:0000786">
    <property type="term" value="C:nucleosome"/>
    <property type="evidence" value="ECO:0007669"/>
    <property type="project" value="UniProtKB-KW"/>
</dbReference>
<dbReference type="GO" id="GO:0005634">
    <property type="term" value="C:nucleus"/>
    <property type="evidence" value="ECO:0007669"/>
    <property type="project" value="UniProtKB-SubCell"/>
</dbReference>
<dbReference type="GO" id="GO:0003677">
    <property type="term" value="F:DNA binding"/>
    <property type="evidence" value="ECO:0000318"/>
    <property type="project" value="GO_Central"/>
</dbReference>
<dbReference type="GO" id="GO:0046982">
    <property type="term" value="F:protein heterodimerization activity"/>
    <property type="evidence" value="ECO:0007669"/>
    <property type="project" value="InterPro"/>
</dbReference>
<dbReference type="GO" id="GO:0030527">
    <property type="term" value="F:structural constituent of chromatin"/>
    <property type="evidence" value="ECO:0007669"/>
    <property type="project" value="InterPro"/>
</dbReference>
<dbReference type="GO" id="GO:0006334">
    <property type="term" value="P:nucleosome assembly"/>
    <property type="evidence" value="ECO:0000318"/>
    <property type="project" value="GO_Central"/>
</dbReference>
<dbReference type="CDD" id="cd22912">
    <property type="entry name" value="HFD_H4"/>
    <property type="match status" value="1"/>
</dbReference>
<dbReference type="FunFam" id="1.10.20.10:FF:000007">
    <property type="entry name" value="Histone H4"/>
    <property type="match status" value="1"/>
</dbReference>
<dbReference type="Gene3D" id="1.10.20.10">
    <property type="entry name" value="Histone, subunit A"/>
    <property type="match status" value="1"/>
</dbReference>
<dbReference type="InterPro" id="IPR035425">
    <property type="entry name" value="CENP-T/H4_C"/>
</dbReference>
<dbReference type="InterPro" id="IPR009072">
    <property type="entry name" value="Histone-fold"/>
</dbReference>
<dbReference type="InterPro" id="IPR001951">
    <property type="entry name" value="Histone_H4"/>
</dbReference>
<dbReference type="InterPro" id="IPR019809">
    <property type="entry name" value="Histone_H4_CS"/>
</dbReference>
<dbReference type="PANTHER" id="PTHR10484">
    <property type="entry name" value="HISTONE H4"/>
    <property type="match status" value="1"/>
</dbReference>
<dbReference type="Pfam" id="PF15511">
    <property type="entry name" value="CENP-T_C"/>
    <property type="match status" value="1"/>
</dbReference>
<dbReference type="PRINTS" id="PR00623">
    <property type="entry name" value="HISTONEH4"/>
</dbReference>
<dbReference type="SMART" id="SM00417">
    <property type="entry name" value="H4"/>
    <property type="match status" value="1"/>
</dbReference>
<dbReference type="SUPFAM" id="SSF47113">
    <property type="entry name" value="Histone-fold"/>
    <property type="match status" value="1"/>
</dbReference>
<dbReference type="PROSITE" id="PS00047">
    <property type="entry name" value="HISTONE_H4"/>
    <property type="match status" value="1"/>
</dbReference>
<reference key="1">
    <citation type="journal article" date="1990" name="Mol. Gen. Genet.">
        <title>Sequence, organization and expression of the core histone genes of Aspergillus nidulans.</title>
        <authorList>
            <person name="Ehinger A."/>
            <person name="Denison S.H."/>
            <person name="May G.S."/>
        </authorList>
    </citation>
    <scope>NUCLEOTIDE SEQUENCE [GENOMIC DNA]</scope>
    <source>
        <strain>R153</strain>
    </source>
</reference>
<reference key="2">
    <citation type="journal article" date="2005" name="Nature">
        <title>Sequencing of Aspergillus nidulans and comparative analysis with A. fumigatus and A. oryzae.</title>
        <authorList>
            <person name="Galagan J.E."/>
            <person name="Calvo S.E."/>
            <person name="Cuomo C."/>
            <person name="Ma L.-J."/>
            <person name="Wortman J.R."/>
            <person name="Batzoglou S."/>
            <person name="Lee S.-I."/>
            <person name="Bastuerkmen M."/>
            <person name="Spevak C.C."/>
            <person name="Clutterbuck J."/>
            <person name="Kapitonov V."/>
            <person name="Jurka J."/>
            <person name="Scazzocchio C."/>
            <person name="Farman M.L."/>
            <person name="Butler J."/>
            <person name="Purcell S."/>
            <person name="Harris S."/>
            <person name="Braus G.H."/>
            <person name="Draht O."/>
            <person name="Busch S."/>
            <person name="D'Enfert C."/>
            <person name="Bouchier C."/>
            <person name="Goldman G.H."/>
            <person name="Bell-Pedersen D."/>
            <person name="Griffiths-Jones S."/>
            <person name="Doonan J.H."/>
            <person name="Yu J."/>
            <person name="Vienken K."/>
            <person name="Pain A."/>
            <person name="Freitag M."/>
            <person name="Selker E.U."/>
            <person name="Archer D.B."/>
            <person name="Penalva M.A."/>
            <person name="Oakley B.R."/>
            <person name="Momany M."/>
            <person name="Tanaka T."/>
            <person name="Kumagai T."/>
            <person name="Asai K."/>
            <person name="Machida M."/>
            <person name="Nierman W.C."/>
            <person name="Denning D.W."/>
            <person name="Caddick M.X."/>
            <person name="Hynes M."/>
            <person name="Paoletti M."/>
            <person name="Fischer R."/>
            <person name="Miller B.L."/>
            <person name="Dyer P.S."/>
            <person name="Sachs M.S."/>
            <person name="Osmani S.A."/>
            <person name="Birren B.W."/>
        </authorList>
    </citation>
    <scope>NUCLEOTIDE SEQUENCE [LARGE SCALE GENOMIC DNA]</scope>
    <source>
        <strain>FGSC A4 / ATCC 38163 / CBS 112.46 / NRRL 194 / M139</strain>
    </source>
</reference>
<reference key="3">
    <citation type="journal article" date="2009" name="Fungal Genet. Biol.">
        <title>The 2008 update of the Aspergillus nidulans genome annotation: a community effort.</title>
        <authorList>
            <person name="Wortman J.R."/>
            <person name="Gilsenan J.M."/>
            <person name="Joardar V."/>
            <person name="Deegan J."/>
            <person name="Clutterbuck J."/>
            <person name="Andersen M.R."/>
            <person name="Archer D."/>
            <person name="Bencina M."/>
            <person name="Braus G."/>
            <person name="Coutinho P."/>
            <person name="von Dohren H."/>
            <person name="Doonan J."/>
            <person name="Driessen A.J."/>
            <person name="Durek P."/>
            <person name="Espeso E."/>
            <person name="Fekete E."/>
            <person name="Flipphi M."/>
            <person name="Estrada C.G."/>
            <person name="Geysens S."/>
            <person name="Goldman G."/>
            <person name="de Groot P.W."/>
            <person name="Hansen K."/>
            <person name="Harris S.D."/>
            <person name="Heinekamp T."/>
            <person name="Helmstaedt K."/>
            <person name="Henrissat B."/>
            <person name="Hofmann G."/>
            <person name="Homan T."/>
            <person name="Horio T."/>
            <person name="Horiuchi H."/>
            <person name="James S."/>
            <person name="Jones M."/>
            <person name="Karaffa L."/>
            <person name="Karanyi Z."/>
            <person name="Kato M."/>
            <person name="Keller N."/>
            <person name="Kelly D.E."/>
            <person name="Kiel J.A."/>
            <person name="Kim J.M."/>
            <person name="van der Klei I.J."/>
            <person name="Klis F.M."/>
            <person name="Kovalchuk A."/>
            <person name="Krasevec N."/>
            <person name="Kubicek C.P."/>
            <person name="Liu B."/>
            <person name="Maccabe A."/>
            <person name="Meyer V."/>
            <person name="Mirabito P."/>
            <person name="Miskei M."/>
            <person name="Mos M."/>
            <person name="Mullins J."/>
            <person name="Nelson D.R."/>
            <person name="Nielsen J."/>
            <person name="Oakley B.R."/>
            <person name="Osmani S.A."/>
            <person name="Pakula T."/>
            <person name="Paszewski A."/>
            <person name="Paulsen I."/>
            <person name="Pilsyk S."/>
            <person name="Pocsi I."/>
            <person name="Punt P.J."/>
            <person name="Ram A.F."/>
            <person name="Ren Q."/>
            <person name="Robellet X."/>
            <person name="Robson G."/>
            <person name="Seiboth B."/>
            <person name="van Solingen P."/>
            <person name="Specht T."/>
            <person name="Sun J."/>
            <person name="Taheri-Talesh N."/>
            <person name="Takeshita N."/>
            <person name="Ussery D."/>
            <person name="vanKuyk P.A."/>
            <person name="Visser H."/>
            <person name="van de Vondervoort P.J."/>
            <person name="de Vries R.P."/>
            <person name="Walton J."/>
            <person name="Xiang X."/>
            <person name="Xiong Y."/>
            <person name="Zeng A.P."/>
            <person name="Brandt B.W."/>
            <person name="Cornell M.J."/>
            <person name="van den Hondel C.A."/>
            <person name="Visser J."/>
            <person name="Oliver S.G."/>
            <person name="Turner G."/>
        </authorList>
    </citation>
    <scope>GENOME REANNOTATION</scope>
    <source>
        <strain>FGSC A4 / ATCC 38163 / CBS 112.46 / NRRL 194 / M139</strain>
    </source>
</reference>
<name>H42_EMENI</name>
<proteinExistence type="inferred from homology"/>
<keyword id="KW-0007">Acetylation</keyword>
<keyword id="KW-0158">Chromosome</keyword>
<keyword id="KW-0238">DNA-binding</keyword>
<keyword id="KW-0488">Methylation</keyword>
<keyword id="KW-0544">Nucleosome core</keyword>
<keyword id="KW-0539">Nucleus</keyword>
<keyword id="KW-1185">Reference proteome</keyword>
<sequence length="103" mass="11372">MSGRGKGGKGLGKGGAKRHRKILRDNIQGITKPAIRRLARRGGVKRISAMIYEETRGVLKSFLESVIRDAVTYTEHAKRKTVTSLDVVYALKRQGRTLYGFGG</sequence>
<gene>
    <name type="primary">hhfB</name>
    <name type="ORF">AN2426</name>
</gene>
<protein>
    <recommendedName>
        <fullName>Histone H4.2</fullName>
    </recommendedName>
</protein>
<comment type="function">
    <text>Core component of nucleosome. Nucleosomes wrap and compact DNA into chromatin, limiting DNA accessibility to the cellular machineries which require DNA as a template. Histones thereby play a central role in transcription regulation, DNA repair, DNA replication and chromosomal stability. DNA accessibility is regulated via a complex set of post-translational modifications of histones, also called histone code, and nucleosome remodeling.</text>
</comment>
<comment type="subunit">
    <text>The nucleosome is a histone octamer containing two molecules each of H2A, H2B, H3 and H4 assembled in one H3-H4 heterotetramer and two H2A-H2B heterodimers. The octamer wraps approximately 147 bp of DNA.</text>
</comment>
<comment type="subcellular location">
    <subcellularLocation>
        <location evidence="1">Nucleus</location>
    </subcellularLocation>
    <subcellularLocation>
        <location evidence="1">Chromosome</location>
    </subcellularLocation>
</comment>
<comment type="PTM">
    <text evidence="2">Glutarylation at Lys-92 (H4K91glu) destabilizes nucleosomes by promoting dissociation of the H2A-H2B dimers from nucleosomes.</text>
</comment>
<comment type="similarity">
    <text evidence="5">Belongs to the histone H4 family.</text>
</comment>
<accession>P23751</accession>
<accession>C8VNZ1</accession>
<accession>Q5BAK4</accession>